<reference key="1">
    <citation type="journal article" date="2016" name="Appl. Environ. Microbiol.">
        <title>The glycoside hydrolase family 8 reducing-end xylose-releasing exo-oligoxylanase Rex8A from Paenibacillus barcinonensis BP-23 is active on branched xylooligosaccharides.</title>
        <authorList>
            <person name="Valenzuela S.V."/>
            <person name="Lopez S."/>
            <person name="Biely P."/>
            <person name="Sanz-Aparicio J."/>
            <person name="Pastor F.I."/>
        </authorList>
    </citation>
    <scope>NUCLEOTIDE SEQUENCE [GENOMIC DNA]</scope>
    <scope>FUNCTION</scope>
    <scope>CATALYTIC ACTIVITY</scope>
    <scope>BIOPHYSICOCHEMICAL PROPERTIES</scope>
    <scope>SUBSTRATE SPECIFICITY</scope>
    <scope>PATHWAY</scope>
    <scope>3D-STRUCTURE MODELING</scope>
    <scope>ACTIVE SITE</scope>
    <scope>MUTAGENESIS OF GLU-70</scope>
    <source>
        <strain>DSM 15478 / BCRC 17560 / CECT 7022 / CIP 108718 / BP-23</strain>
    </source>
</reference>
<reference key="2">
    <citation type="journal article" date="2015" name="Stand. Genomic Sci.">
        <title>Genomic Encyclopedia of Bacterial and Archaeal Type Strains, Phase III: the genomes of soil and plant-associated and newly described type strains.</title>
        <authorList>
            <person name="Whitman W.B."/>
            <person name="Woyke T."/>
            <person name="Klenk H.P."/>
            <person name="Zhou Y."/>
            <person name="Lilburn T.G."/>
            <person name="Beck B.J."/>
            <person name="De Vos P."/>
            <person name="Vandamme P."/>
            <person name="Eisen J.A."/>
            <person name="Garrity G."/>
            <person name="Hugenholtz P."/>
            <person name="Kyrpides N.C."/>
        </authorList>
    </citation>
    <scope>NUCLEOTIDE SEQUENCE [LARGE SCALE GENOMIC DNA]</scope>
    <source>
        <strain>DSM 15478 / BCRC 17560 / CECT 7022 / CIP 108718 / BP-23</strain>
    </source>
</reference>
<comment type="function">
    <text evidence="1">Involved in depolymerization of xylan, a major component of the lignocellulosic substrates. Acts as an exo-oligoxylanase that efficiently hydrolyzes xylooligosaccharides, releasing xylose from their reducing ends. Hydrolyzes xylooligomers of 3 to 6 xylose units to xylose and xylobiose. Besides linear xylooligosaccharides, also hydrolyzes branched xylooligomers, such as xylooligomers decorated with 4-O-methyl-D-glucuronic acid moieties. Its proposed role is the degradation of xylooligomers produced by the activity of extracellular xylanases once they have been transported inside cells. Shows minor activity on polymeric xylan (glucuronoxylan from beechwood). Is not active on cellooligosaccharides or cellulosic substrates, or on other polysaccharides such as pectin, polygalacturonic acid, laminarin, or lichenan.</text>
</comment>
<comment type="catalytic activity">
    <reaction evidence="1">
        <text>Hydrolysis of (1-&gt;4)-beta-D-xylose residues from the reducing end of oligosaccharides.</text>
        <dbReference type="EC" id="3.2.1.156"/>
    </reaction>
</comment>
<comment type="biophysicochemical properties">
    <kinetics>
        <KM evidence="1">1.64 mM for xylotriose</KM>
        <Vmax evidence="1">152.2 umol/min/mg enzyme for the hydrolysis of xylotriose</Vmax>
        <text evidence="1">kcat is 118.8 sec(-1) for the hydrolysis of xylotriose.</text>
    </kinetics>
    <phDependence>
        <text evidence="1">Optimum pH is 7 for the hydrolysis of xylotriose.</text>
    </phDependence>
    <temperatureDependence>
        <text evidence="1">Optimum temperature is 40 degrees Celsius for the hydrolysis of xylotriose.</text>
    </temperatureDependence>
</comment>
<comment type="pathway">
    <text evidence="1">Glycan degradation; xylan degradation.</text>
</comment>
<comment type="similarity">
    <text evidence="3">Belongs to the glycosyl hydrolase 8 (cellulase D) family.</text>
</comment>
<evidence type="ECO:0000269" key="1">
    <source>
    </source>
</evidence>
<evidence type="ECO:0000303" key="2">
    <source>
    </source>
</evidence>
<evidence type="ECO:0000305" key="3"/>
<evidence type="ECO:0000305" key="4">
    <source>
    </source>
</evidence>
<evidence type="ECO:0000312" key="5">
    <source>
        <dbReference type="EMBL" id="ALP73600.1"/>
    </source>
</evidence>
<evidence type="ECO:0000312" key="6">
    <source>
        <dbReference type="EMBL" id="PYE48000.1"/>
    </source>
</evidence>
<evidence type="ECO:0007829" key="7">
    <source>
        <dbReference type="PDB" id="6SHY"/>
    </source>
</evidence>
<evidence type="ECO:0007829" key="8">
    <source>
        <dbReference type="PDB" id="6SRD"/>
    </source>
</evidence>
<evidence type="ECO:0007829" key="9">
    <source>
        <dbReference type="PDB" id="6SUD"/>
    </source>
</evidence>
<evidence type="ECO:0007829" key="10">
    <source>
        <dbReference type="PDB" id="6TRH"/>
    </source>
</evidence>
<accession>A0A0S2UQQ5</accession>
<keyword id="KW-0002">3D-structure</keyword>
<keyword id="KW-0119">Carbohydrate metabolism</keyword>
<keyword id="KW-0326">Glycosidase</keyword>
<keyword id="KW-0378">Hydrolase</keyword>
<keyword id="KW-0624">Polysaccharide degradation</keyword>
<keyword id="KW-0858">Xylan degradation</keyword>
<sequence>MNITGKGAYDTGTYANLFQRSGYREDEIKARLEQTWNDLFYGDEHTRIYYPVGDDKGYMLDTGNDDVRSEGMSYGMMMAVQMDKKHEFDRLWNYAYTYMQHTEGRYKDYFAWHCKPDGTRLSPGPAPDGEEFFAMALFFASNRWGDGPAPYDYQAQARKILHACLHQGEQGEGDPMWEPSNRLIKFIPELPFSDPSYHLPHFYELFAQYANEQDRTFWKEAAEASRAYLRTACHPVTGLSPEYANYDGTPAPVQLHGDFRHFYSDAYRVAANVALDWEWFRKDPWQVQQSNRIQAFFSDIDVSDYRRYTIEGEPFNEPALHPVGLLATNAMASLAADGPDADSFVKRFWNTPLRQGKRRYYDNCLYFFTMLALSGNYRVY</sequence>
<name>REX8A_PAEBA</name>
<gene>
    <name evidence="2 5" type="primary">rex8A</name>
    <name evidence="6" type="ORF">DFQ00_11062</name>
</gene>
<organism>
    <name type="scientific">Paenibacillus barcinonensis</name>
    <dbReference type="NCBI Taxonomy" id="198119"/>
    <lineage>
        <taxon>Bacteria</taxon>
        <taxon>Bacillati</taxon>
        <taxon>Bacillota</taxon>
        <taxon>Bacilli</taxon>
        <taxon>Bacillales</taxon>
        <taxon>Paenibacillaceae</taxon>
        <taxon>Paenibacillus</taxon>
    </lineage>
</organism>
<feature type="chain" id="PRO_0000446222" description="Reducing-end xylose-releasing exo-oligoxylanase Rex8A">
    <location>
        <begin position="1"/>
        <end position="380"/>
    </location>
</feature>
<feature type="active site" description="Proton donor" evidence="4">
    <location>
        <position position="70"/>
    </location>
</feature>
<feature type="active site" description="Proton acceptor" evidence="4">
    <location>
        <position position="265"/>
    </location>
</feature>
<feature type="mutagenesis site" description="Loss of enzymatic activity." evidence="1">
    <original>E</original>
    <variation>A</variation>
    <location>
        <position position="70"/>
    </location>
</feature>
<feature type="helix" evidence="9">
    <location>
        <begin position="8"/>
        <end position="11"/>
    </location>
</feature>
<feature type="helix" evidence="9">
    <location>
        <begin position="17"/>
        <end position="20"/>
    </location>
</feature>
<feature type="helix" evidence="9">
    <location>
        <begin position="25"/>
        <end position="41"/>
    </location>
</feature>
<feature type="turn" evidence="9">
    <location>
        <begin position="44"/>
        <end position="46"/>
    </location>
</feature>
<feature type="strand" evidence="9">
    <location>
        <begin position="49"/>
        <end position="52"/>
    </location>
</feature>
<feature type="turn" evidence="9">
    <location>
        <begin position="53"/>
        <end position="55"/>
    </location>
</feature>
<feature type="strand" evidence="9">
    <location>
        <begin position="56"/>
        <end position="59"/>
    </location>
</feature>
<feature type="turn" evidence="9">
    <location>
        <begin position="62"/>
        <end position="65"/>
    </location>
</feature>
<feature type="strand" evidence="9">
    <location>
        <begin position="66"/>
        <end position="68"/>
    </location>
</feature>
<feature type="helix" evidence="9">
    <location>
        <begin position="69"/>
        <end position="81"/>
    </location>
</feature>
<feature type="helix" evidence="9">
    <location>
        <begin position="85"/>
        <end position="98"/>
    </location>
</feature>
<feature type="strand" evidence="9">
    <location>
        <begin position="102"/>
        <end position="104"/>
    </location>
</feature>
<feature type="turn" evidence="9">
    <location>
        <begin position="105"/>
        <end position="108"/>
    </location>
</feature>
<feature type="strand" evidence="9">
    <location>
        <begin position="112"/>
        <end position="114"/>
    </location>
</feature>
<feature type="strand" evidence="9">
    <location>
        <begin position="120"/>
        <end position="122"/>
    </location>
</feature>
<feature type="helix" evidence="9">
    <location>
        <begin position="127"/>
        <end position="144"/>
    </location>
</feature>
<feature type="helix" evidence="9">
    <location>
        <begin position="153"/>
        <end position="170"/>
    </location>
</feature>
<feature type="strand" evidence="7">
    <location>
        <begin position="171"/>
        <end position="173"/>
    </location>
</feature>
<feature type="strand" evidence="8">
    <location>
        <begin position="176"/>
        <end position="178"/>
    </location>
</feature>
<feature type="turn" evidence="9">
    <location>
        <begin position="179"/>
        <end position="181"/>
    </location>
</feature>
<feature type="strand" evidence="10">
    <location>
        <begin position="186"/>
        <end position="191"/>
    </location>
</feature>
<feature type="helix" evidence="9">
    <location>
        <begin position="195"/>
        <end position="197"/>
    </location>
</feature>
<feature type="helix" evidence="9">
    <location>
        <begin position="200"/>
        <end position="209"/>
    </location>
</feature>
<feature type="helix" evidence="9">
    <location>
        <begin position="212"/>
        <end position="214"/>
    </location>
</feature>
<feature type="helix" evidence="9">
    <location>
        <begin position="215"/>
        <end position="232"/>
    </location>
</feature>
<feature type="turn" evidence="9">
    <location>
        <begin position="235"/>
        <end position="237"/>
    </location>
</feature>
<feature type="strand" evidence="9">
    <location>
        <begin position="242"/>
        <end position="244"/>
    </location>
</feature>
<feature type="strand" evidence="9">
    <location>
        <begin position="248"/>
        <end position="250"/>
    </location>
</feature>
<feature type="strand" evidence="9">
    <location>
        <begin position="260"/>
        <end position="263"/>
    </location>
</feature>
<feature type="helix" evidence="9">
    <location>
        <begin position="264"/>
        <end position="267"/>
    </location>
</feature>
<feature type="helix" evidence="9">
    <location>
        <begin position="268"/>
        <end position="280"/>
    </location>
</feature>
<feature type="helix" evidence="9">
    <location>
        <begin position="285"/>
        <end position="297"/>
    </location>
</feature>
<feature type="helix" evidence="9">
    <location>
        <begin position="302"/>
        <end position="304"/>
    </location>
</feature>
<feature type="strand" evidence="9">
    <location>
        <begin position="306"/>
        <end position="308"/>
    </location>
</feature>
<feature type="strand" evidence="9">
    <location>
        <begin position="314"/>
        <end position="318"/>
    </location>
</feature>
<feature type="helix" evidence="9">
    <location>
        <begin position="322"/>
        <end position="331"/>
    </location>
</feature>
<feature type="helix" evidence="9">
    <location>
        <begin position="332"/>
        <end position="334"/>
    </location>
</feature>
<feature type="helix" evidence="9">
    <location>
        <begin position="341"/>
        <end position="349"/>
    </location>
</feature>
<feature type="helix" evidence="9">
    <location>
        <begin position="359"/>
        <end position="373"/>
    </location>
</feature>
<protein>
    <recommendedName>
        <fullName evidence="2">Reducing-end xylose-releasing exo-oligoxylanase Rex8A</fullName>
        <shortName evidence="2">Rex</shortName>
        <ecNumber evidence="1">3.2.1.156</ecNumber>
    </recommendedName>
</protein>
<proteinExistence type="evidence at protein level"/>
<dbReference type="EC" id="3.2.1.156" evidence="1"/>
<dbReference type="EMBL" id="KT251207">
    <property type="protein sequence ID" value="ALP73600.1"/>
    <property type="molecule type" value="Genomic_DNA"/>
</dbReference>
<dbReference type="EMBL" id="QJSW01000010">
    <property type="protein sequence ID" value="PYE48000.1"/>
    <property type="molecule type" value="Genomic_DNA"/>
</dbReference>
<dbReference type="RefSeq" id="WP_110897543.1">
    <property type="nucleotide sequence ID" value="NZ_CP054614.1"/>
</dbReference>
<dbReference type="PDB" id="6SHY">
    <property type="method" value="X-ray"/>
    <property type="resolution" value="1.81 A"/>
    <property type="chains" value="A/B=1-380"/>
</dbReference>
<dbReference type="PDB" id="6SRD">
    <property type="method" value="X-ray"/>
    <property type="resolution" value="1.93 A"/>
    <property type="chains" value="A/B=1-380"/>
</dbReference>
<dbReference type="PDB" id="6SUD">
    <property type="method" value="X-ray"/>
    <property type="resolution" value="1.74 A"/>
    <property type="chains" value="A/B=1-380"/>
</dbReference>
<dbReference type="PDB" id="6TO0">
    <property type="method" value="X-ray"/>
    <property type="resolution" value="1.88 A"/>
    <property type="chains" value="A/B=1-380"/>
</dbReference>
<dbReference type="PDB" id="6TOW">
    <property type="method" value="X-ray"/>
    <property type="resolution" value="2.05 A"/>
    <property type="chains" value="A/B=1-380"/>
</dbReference>
<dbReference type="PDB" id="6TPP">
    <property type="method" value="X-ray"/>
    <property type="resolution" value="2.64 A"/>
    <property type="chains" value="A/B=1-380"/>
</dbReference>
<dbReference type="PDB" id="6TRH">
    <property type="method" value="X-ray"/>
    <property type="resolution" value="1.86 A"/>
    <property type="chains" value="A/B/C/D=1-380"/>
</dbReference>
<dbReference type="PDBsum" id="6SHY"/>
<dbReference type="PDBsum" id="6SRD"/>
<dbReference type="PDBsum" id="6SUD"/>
<dbReference type="PDBsum" id="6TO0"/>
<dbReference type="PDBsum" id="6TOW"/>
<dbReference type="PDBsum" id="6TPP"/>
<dbReference type="PDBsum" id="6TRH"/>
<dbReference type="SMR" id="A0A0S2UQQ5"/>
<dbReference type="OrthoDB" id="9803461at2"/>
<dbReference type="BRENDA" id="3.2.1.156">
    <property type="organism ID" value="13889"/>
</dbReference>
<dbReference type="UniPathway" id="UPA00114"/>
<dbReference type="Proteomes" id="UP000247790">
    <property type="component" value="Unassembled WGS sequence"/>
</dbReference>
<dbReference type="GO" id="GO:0033951">
    <property type="term" value="F:oligosaccharide reducing-end xylanase activity"/>
    <property type="evidence" value="ECO:0000314"/>
    <property type="project" value="UniProtKB"/>
</dbReference>
<dbReference type="GO" id="GO:0045493">
    <property type="term" value="P:xylan catabolic process"/>
    <property type="evidence" value="ECO:0000314"/>
    <property type="project" value="UniProtKB"/>
</dbReference>
<dbReference type="Gene3D" id="1.50.10.10">
    <property type="match status" value="1"/>
</dbReference>
<dbReference type="InterPro" id="IPR008928">
    <property type="entry name" value="6-hairpin_glycosidase_sf"/>
</dbReference>
<dbReference type="InterPro" id="IPR012341">
    <property type="entry name" value="6hp_glycosidase-like_sf"/>
</dbReference>
<dbReference type="InterPro" id="IPR002037">
    <property type="entry name" value="Glyco_hydro_8"/>
</dbReference>
<dbReference type="Pfam" id="PF01270">
    <property type="entry name" value="Glyco_hydro_8"/>
    <property type="match status" value="1"/>
</dbReference>
<dbReference type="PRINTS" id="PR00735">
    <property type="entry name" value="GLHYDRLASE8"/>
</dbReference>
<dbReference type="SUPFAM" id="SSF48208">
    <property type="entry name" value="Six-hairpin glycosidases"/>
    <property type="match status" value="1"/>
</dbReference>